<proteinExistence type="inferred from homology"/>
<sequence length="146" mass="15815">MAETQTTTPKKKAERRAPPPARARKNRPAAPAPGPHASLSYLRVAPRKVRIVADEVRGMKVGDALAMLKYTPQSAAKPLAKLLRSAVANAEQGGGRVDVDALFVKTLTVDQGPKMRRFMARAMGRAFRVEKKTSHVYVELGTAARG</sequence>
<keyword id="KW-1185">Reference proteome</keyword>
<keyword id="KW-0687">Ribonucleoprotein</keyword>
<keyword id="KW-0689">Ribosomal protein</keyword>
<keyword id="KW-0694">RNA-binding</keyword>
<keyword id="KW-0699">rRNA-binding</keyword>
<gene>
    <name evidence="1" type="primary">rplV</name>
    <name type="ordered locus">Adeh_1941</name>
</gene>
<reference key="1">
    <citation type="submission" date="2006-01" db="EMBL/GenBank/DDBJ databases">
        <title>Complete sequence of Anaeromyxobacter dehalogenans 2CP-C.</title>
        <authorList>
            <person name="Copeland A."/>
            <person name="Lucas S."/>
            <person name="Lapidus A."/>
            <person name="Barry K."/>
            <person name="Detter J.C."/>
            <person name="Glavina T."/>
            <person name="Hammon N."/>
            <person name="Israni S."/>
            <person name="Pitluck S."/>
            <person name="Brettin T."/>
            <person name="Bruce D."/>
            <person name="Han C."/>
            <person name="Tapia R."/>
            <person name="Gilna P."/>
            <person name="Kiss H."/>
            <person name="Schmutz J."/>
            <person name="Larimer F."/>
            <person name="Land M."/>
            <person name="Kyrpides N."/>
            <person name="Anderson I."/>
            <person name="Sanford R.A."/>
            <person name="Ritalahti K.M."/>
            <person name="Thomas H.S."/>
            <person name="Kirby J.R."/>
            <person name="Zhulin I.B."/>
            <person name="Loeffler F.E."/>
            <person name="Richardson P."/>
        </authorList>
    </citation>
    <scope>NUCLEOTIDE SEQUENCE [LARGE SCALE GENOMIC DNA]</scope>
    <source>
        <strain>2CP-C</strain>
    </source>
</reference>
<comment type="function">
    <text evidence="1">This protein binds specifically to 23S rRNA; its binding is stimulated by other ribosomal proteins, e.g. L4, L17, and L20. It is important during the early stages of 50S assembly. It makes multiple contacts with different domains of the 23S rRNA in the assembled 50S subunit and ribosome (By similarity).</text>
</comment>
<comment type="function">
    <text evidence="1">The globular domain of the protein is located near the polypeptide exit tunnel on the outside of the subunit, while an extended beta-hairpin is found that lines the wall of the exit tunnel in the center of the 70S ribosome.</text>
</comment>
<comment type="subunit">
    <text evidence="1">Part of the 50S ribosomal subunit.</text>
</comment>
<comment type="similarity">
    <text evidence="1">Belongs to the universal ribosomal protein uL22 family.</text>
</comment>
<accession>Q2IJ81</accession>
<evidence type="ECO:0000255" key="1">
    <source>
        <dbReference type="HAMAP-Rule" id="MF_01331"/>
    </source>
</evidence>
<evidence type="ECO:0000256" key="2">
    <source>
        <dbReference type="SAM" id="MobiDB-lite"/>
    </source>
</evidence>
<evidence type="ECO:0000305" key="3"/>
<organism>
    <name type="scientific">Anaeromyxobacter dehalogenans (strain 2CP-C)</name>
    <dbReference type="NCBI Taxonomy" id="290397"/>
    <lineage>
        <taxon>Bacteria</taxon>
        <taxon>Pseudomonadati</taxon>
        <taxon>Myxococcota</taxon>
        <taxon>Myxococcia</taxon>
        <taxon>Myxococcales</taxon>
        <taxon>Cystobacterineae</taxon>
        <taxon>Anaeromyxobacteraceae</taxon>
        <taxon>Anaeromyxobacter</taxon>
    </lineage>
</organism>
<name>RL22_ANADE</name>
<feature type="chain" id="PRO_0000243112" description="Large ribosomal subunit protein uL22">
    <location>
        <begin position="1"/>
        <end position="146"/>
    </location>
</feature>
<feature type="region of interest" description="Disordered" evidence="2">
    <location>
        <begin position="1"/>
        <end position="39"/>
    </location>
</feature>
<protein>
    <recommendedName>
        <fullName evidence="1">Large ribosomal subunit protein uL22</fullName>
    </recommendedName>
    <alternativeName>
        <fullName evidence="3">50S ribosomal protein L22</fullName>
    </alternativeName>
</protein>
<dbReference type="EMBL" id="CP000251">
    <property type="protein sequence ID" value="ABC81712.1"/>
    <property type="molecule type" value="Genomic_DNA"/>
</dbReference>
<dbReference type="SMR" id="Q2IJ81"/>
<dbReference type="STRING" id="290397.Adeh_1941"/>
<dbReference type="KEGG" id="ade:Adeh_1941"/>
<dbReference type="eggNOG" id="COG0091">
    <property type="taxonomic scope" value="Bacteria"/>
</dbReference>
<dbReference type="HOGENOM" id="CLU_083987_3_1_7"/>
<dbReference type="OrthoDB" id="9805969at2"/>
<dbReference type="Proteomes" id="UP000001935">
    <property type="component" value="Chromosome"/>
</dbReference>
<dbReference type="GO" id="GO:0022625">
    <property type="term" value="C:cytosolic large ribosomal subunit"/>
    <property type="evidence" value="ECO:0007669"/>
    <property type="project" value="TreeGrafter"/>
</dbReference>
<dbReference type="GO" id="GO:0019843">
    <property type="term" value="F:rRNA binding"/>
    <property type="evidence" value="ECO:0007669"/>
    <property type="project" value="UniProtKB-UniRule"/>
</dbReference>
<dbReference type="GO" id="GO:0003735">
    <property type="term" value="F:structural constituent of ribosome"/>
    <property type="evidence" value="ECO:0007669"/>
    <property type="project" value="InterPro"/>
</dbReference>
<dbReference type="GO" id="GO:0006412">
    <property type="term" value="P:translation"/>
    <property type="evidence" value="ECO:0007669"/>
    <property type="project" value="UniProtKB-UniRule"/>
</dbReference>
<dbReference type="CDD" id="cd00336">
    <property type="entry name" value="Ribosomal_L22"/>
    <property type="match status" value="1"/>
</dbReference>
<dbReference type="Gene3D" id="3.90.470.10">
    <property type="entry name" value="Ribosomal protein L22/L17"/>
    <property type="match status" value="1"/>
</dbReference>
<dbReference type="HAMAP" id="MF_01331_B">
    <property type="entry name" value="Ribosomal_uL22_B"/>
    <property type="match status" value="1"/>
</dbReference>
<dbReference type="InterPro" id="IPR001063">
    <property type="entry name" value="Ribosomal_uL22"/>
</dbReference>
<dbReference type="InterPro" id="IPR005727">
    <property type="entry name" value="Ribosomal_uL22_bac/chlpt-type"/>
</dbReference>
<dbReference type="InterPro" id="IPR047867">
    <property type="entry name" value="Ribosomal_uL22_bac/org-type"/>
</dbReference>
<dbReference type="InterPro" id="IPR018260">
    <property type="entry name" value="Ribosomal_uL22_CS"/>
</dbReference>
<dbReference type="InterPro" id="IPR036394">
    <property type="entry name" value="Ribosomal_uL22_sf"/>
</dbReference>
<dbReference type="NCBIfam" id="TIGR01044">
    <property type="entry name" value="rplV_bact"/>
    <property type="match status" value="1"/>
</dbReference>
<dbReference type="PANTHER" id="PTHR13501">
    <property type="entry name" value="CHLOROPLAST 50S RIBOSOMAL PROTEIN L22-RELATED"/>
    <property type="match status" value="1"/>
</dbReference>
<dbReference type="PANTHER" id="PTHR13501:SF8">
    <property type="entry name" value="LARGE RIBOSOMAL SUBUNIT PROTEIN UL22M"/>
    <property type="match status" value="1"/>
</dbReference>
<dbReference type="Pfam" id="PF00237">
    <property type="entry name" value="Ribosomal_L22"/>
    <property type="match status" value="1"/>
</dbReference>
<dbReference type="SUPFAM" id="SSF54843">
    <property type="entry name" value="Ribosomal protein L22"/>
    <property type="match status" value="1"/>
</dbReference>
<dbReference type="PROSITE" id="PS00464">
    <property type="entry name" value="RIBOSOMAL_L22"/>
    <property type="match status" value="1"/>
</dbReference>